<sequence length="567" mass="63863">MKQSKVFIPTMRDVPSEAEAQSHRLLLKSGLIKQSTSGIYSYLPLATRVLNNITAIVRQEMERIDSVEILMPALQQAELWEESGRWGAYGPELMRLQDRHGRQFALGPTHEELVTSIVRNELKSYKQLPMTLFQIQSKFRDEKRPRFGLLRGREFIMKDAYSFHADEASLDQTYQDMYQAYSRIFERVGINARPVVADSGAIGGSHTHEFMALSAIGEDTIVYSKESDYAANIEKAEVVYEPNHKHTTVQPLEKIETPNVKTAQELADFLGRPVDEIVKTMIFKVDGEYIMVLVRGHHEINDIKLKSYFGTDNIELATQDEIVNLVGANPGSLGPVIDKEIKIYADNFVQDLNNLVVGANEDGYHLINVNVGRDFNVDEYGDFRFILEGEKLSDGSGVAHFAEGIEVGQVFKLGTKYSESMNATFLDNQGKAQSLIMGCYGIGISRTLSAIVEQNHDDNGIVWPKSVTPFDLHLISINPKKDDQRELADALYAEFNTKFDVLYDDRQERAGVKFNDADLIGLPLRIVVGKRASEGIVEVKERLTGDSEEVHIDDLMTVITNKYDNLK</sequence>
<protein>
    <recommendedName>
        <fullName evidence="1">Proline--tRNA ligase</fullName>
        <ecNumber evidence="1">6.1.1.15</ecNumber>
    </recommendedName>
    <alternativeName>
        <fullName evidence="1">Prolyl-tRNA synthetase</fullName>
        <shortName evidence="1">ProRS</shortName>
    </alternativeName>
</protein>
<name>SYP_STAAT</name>
<comment type="function">
    <text evidence="1">Catalyzes the attachment of proline to tRNA(Pro) in a two-step reaction: proline is first activated by ATP to form Pro-AMP and then transferred to the acceptor end of tRNA(Pro). As ProRS can inadvertently accommodate and process non-cognate amino acids such as alanine and cysteine, to avoid such errors it has two additional distinct editing activities against alanine. One activity is designated as 'pretransfer' editing and involves the tRNA(Pro)-independent hydrolysis of activated Ala-AMP. The other activity is designated 'posttransfer' editing and involves deacylation of mischarged Ala-tRNA(Pro). The misacylated Cys-tRNA(Pro) is not edited by ProRS.</text>
</comment>
<comment type="catalytic activity">
    <reaction evidence="1">
        <text>tRNA(Pro) + L-proline + ATP = L-prolyl-tRNA(Pro) + AMP + diphosphate</text>
        <dbReference type="Rhea" id="RHEA:14305"/>
        <dbReference type="Rhea" id="RHEA-COMP:9700"/>
        <dbReference type="Rhea" id="RHEA-COMP:9702"/>
        <dbReference type="ChEBI" id="CHEBI:30616"/>
        <dbReference type="ChEBI" id="CHEBI:33019"/>
        <dbReference type="ChEBI" id="CHEBI:60039"/>
        <dbReference type="ChEBI" id="CHEBI:78442"/>
        <dbReference type="ChEBI" id="CHEBI:78532"/>
        <dbReference type="ChEBI" id="CHEBI:456215"/>
        <dbReference type="EC" id="6.1.1.15"/>
    </reaction>
</comment>
<comment type="subunit">
    <text evidence="1">Homodimer.</text>
</comment>
<comment type="subcellular location">
    <subcellularLocation>
        <location evidence="1">Cytoplasm</location>
    </subcellularLocation>
</comment>
<comment type="domain">
    <text evidence="1">Consists of three domains: the N-terminal catalytic domain, the editing domain and the C-terminal anticodon-binding domain.</text>
</comment>
<comment type="similarity">
    <text evidence="1">Belongs to the class-II aminoacyl-tRNA synthetase family. ProS type 1 subfamily.</text>
</comment>
<proteinExistence type="inferred from homology"/>
<feature type="chain" id="PRO_1000087858" description="Proline--tRNA ligase">
    <location>
        <begin position="1"/>
        <end position="567"/>
    </location>
</feature>
<gene>
    <name evidence="1" type="primary">proS</name>
    <name type="ordered locus">USA300HOU_1195</name>
</gene>
<organism>
    <name type="scientific">Staphylococcus aureus (strain USA300 / TCH1516)</name>
    <dbReference type="NCBI Taxonomy" id="451516"/>
    <lineage>
        <taxon>Bacteria</taxon>
        <taxon>Bacillati</taxon>
        <taxon>Bacillota</taxon>
        <taxon>Bacilli</taxon>
        <taxon>Bacillales</taxon>
        <taxon>Staphylococcaceae</taxon>
        <taxon>Staphylococcus</taxon>
    </lineage>
</organism>
<evidence type="ECO:0000255" key="1">
    <source>
        <dbReference type="HAMAP-Rule" id="MF_01569"/>
    </source>
</evidence>
<reference key="1">
    <citation type="journal article" date="2007" name="BMC Microbiol.">
        <title>Subtle genetic changes enhance virulence of methicillin resistant and sensitive Staphylococcus aureus.</title>
        <authorList>
            <person name="Highlander S.K."/>
            <person name="Hulten K.G."/>
            <person name="Qin X."/>
            <person name="Jiang H."/>
            <person name="Yerrapragada S."/>
            <person name="Mason E.O. Jr."/>
            <person name="Shang Y."/>
            <person name="Williams T.M."/>
            <person name="Fortunov R.M."/>
            <person name="Liu Y."/>
            <person name="Igboeli O."/>
            <person name="Petrosino J."/>
            <person name="Tirumalai M."/>
            <person name="Uzman A."/>
            <person name="Fox G.E."/>
            <person name="Cardenas A.M."/>
            <person name="Muzny D.M."/>
            <person name="Hemphill L."/>
            <person name="Ding Y."/>
            <person name="Dugan S."/>
            <person name="Blyth P.R."/>
            <person name="Buhay C.J."/>
            <person name="Dinh H.H."/>
            <person name="Hawes A.C."/>
            <person name="Holder M."/>
            <person name="Kovar C.L."/>
            <person name="Lee S.L."/>
            <person name="Liu W."/>
            <person name="Nazareth L.V."/>
            <person name="Wang Q."/>
            <person name="Zhou J."/>
            <person name="Kaplan S.L."/>
            <person name="Weinstock G.M."/>
        </authorList>
    </citation>
    <scope>NUCLEOTIDE SEQUENCE [LARGE SCALE GENOMIC DNA]</scope>
    <source>
        <strain>USA300 / TCH1516</strain>
    </source>
</reference>
<accession>A8Z3U3</accession>
<dbReference type="EC" id="6.1.1.15" evidence="1"/>
<dbReference type="EMBL" id="CP000730">
    <property type="protein sequence ID" value="ABX29209.1"/>
    <property type="molecule type" value="Genomic_DNA"/>
</dbReference>
<dbReference type="RefSeq" id="WP_000814103.1">
    <property type="nucleotide sequence ID" value="NC_010079.1"/>
</dbReference>
<dbReference type="SMR" id="A8Z3U3"/>
<dbReference type="KEGG" id="sax:USA300HOU_1195"/>
<dbReference type="HOGENOM" id="CLU_016739_0_0_9"/>
<dbReference type="GO" id="GO:0005829">
    <property type="term" value="C:cytosol"/>
    <property type="evidence" value="ECO:0007669"/>
    <property type="project" value="TreeGrafter"/>
</dbReference>
<dbReference type="GO" id="GO:0002161">
    <property type="term" value="F:aminoacyl-tRNA deacylase activity"/>
    <property type="evidence" value="ECO:0007669"/>
    <property type="project" value="InterPro"/>
</dbReference>
<dbReference type="GO" id="GO:0005524">
    <property type="term" value="F:ATP binding"/>
    <property type="evidence" value="ECO:0007669"/>
    <property type="project" value="UniProtKB-UniRule"/>
</dbReference>
<dbReference type="GO" id="GO:0140096">
    <property type="term" value="F:catalytic activity, acting on a protein"/>
    <property type="evidence" value="ECO:0007669"/>
    <property type="project" value="UniProtKB-ARBA"/>
</dbReference>
<dbReference type="GO" id="GO:0004827">
    <property type="term" value="F:proline-tRNA ligase activity"/>
    <property type="evidence" value="ECO:0007669"/>
    <property type="project" value="UniProtKB-UniRule"/>
</dbReference>
<dbReference type="GO" id="GO:0016740">
    <property type="term" value="F:transferase activity"/>
    <property type="evidence" value="ECO:0007669"/>
    <property type="project" value="UniProtKB-ARBA"/>
</dbReference>
<dbReference type="GO" id="GO:0006433">
    <property type="term" value="P:prolyl-tRNA aminoacylation"/>
    <property type="evidence" value="ECO:0007669"/>
    <property type="project" value="UniProtKB-UniRule"/>
</dbReference>
<dbReference type="CDD" id="cd04334">
    <property type="entry name" value="ProRS-INS"/>
    <property type="match status" value="1"/>
</dbReference>
<dbReference type="CDD" id="cd00861">
    <property type="entry name" value="ProRS_anticodon_short"/>
    <property type="match status" value="1"/>
</dbReference>
<dbReference type="CDD" id="cd00779">
    <property type="entry name" value="ProRS_core_prok"/>
    <property type="match status" value="1"/>
</dbReference>
<dbReference type="FunFam" id="3.30.930.10:FF:000043">
    <property type="entry name" value="Proline--tRNA ligase"/>
    <property type="match status" value="1"/>
</dbReference>
<dbReference type="FunFam" id="3.40.50.800:FF:000011">
    <property type="entry name" value="Proline--tRNA ligase"/>
    <property type="match status" value="1"/>
</dbReference>
<dbReference type="Gene3D" id="3.40.50.800">
    <property type="entry name" value="Anticodon-binding domain"/>
    <property type="match status" value="1"/>
</dbReference>
<dbReference type="Gene3D" id="3.30.930.10">
    <property type="entry name" value="Bira Bifunctional Protein, Domain 2"/>
    <property type="match status" value="2"/>
</dbReference>
<dbReference type="Gene3D" id="3.90.960.10">
    <property type="entry name" value="YbaK/aminoacyl-tRNA synthetase-associated domain"/>
    <property type="match status" value="1"/>
</dbReference>
<dbReference type="HAMAP" id="MF_01569">
    <property type="entry name" value="Pro_tRNA_synth_type1"/>
    <property type="match status" value="1"/>
</dbReference>
<dbReference type="InterPro" id="IPR002314">
    <property type="entry name" value="aa-tRNA-synt_IIb"/>
</dbReference>
<dbReference type="InterPro" id="IPR006195">
    <property type="entry name" value="aa-tRNA-synth_II"/>
</dbReference>
<dbReference type="InterPro" id="IPR045864">
    <property type="entry name" value="aa-tRNA-synth_II/BPL/LPL"/>
</dbReference>
<dbReference type="InterPro" id="IPR004154">
    <property type="entry name" value="Anticodon-bd"/>
</dbReference>
<dbReference type="InterPro" id="IPR036621">
    <property type="entry name" value="Anticodon-bd_dom_sf"/>
</dbReference>
<dbReference type="InterPro" id="IPR002316">
    <property type="entry name" value="Pro-tRNA-ligase_IIa"/>
</dbReference>
<dbReference type="InterPro" id="IPR004500">
    <property type="entry name" value="Pro-tRNA-synth_IIa_bac-type"/>
</dbReference>
<dbReference type="InterPro" id="IPR023717">
    <property type="entry name" value="Pro-tRNA-Synthase_IIa_type1"/>
</dbReference>
<dbReference type="InterPro" id="IPR050062">
    <property type="entry name" value="Pro-tRNA_synthetase"/>
</dbReference>
<dbReference type="InterPro" id="IPR044140">
    <property type="entry name" value="ProRS_anticodon_short"/>
</dbReference>
<dbReference type="InterPro" id="IPR033730">
    <property type="entry name" value="ProRS_core_prok"/>
</dbReference>
<dbReference type="InterPro" id="IPR036754">
    <property type="entry name" value="YbaK/aa-tRNA-synt-asso_dom_sf"/>
</dbReference>
<dbReference type="InterPro" id="IPR007214">
    <property type="entry name" value="YbaK/aa-tRNA-synth-assoc-dom"/>
</dbReference>
<dbReference type="NCBIfam" id="NF006625">
    <property type="entry name" value="PRK09194.1"/>
    <property type="match status" value="1"/>
</dbReference>
<dbReference type="NCBIfam" id="TIGR00409">
    <property type="entry name" value="proS_fam_II"/>
    <property type="match status" value="1"/>
</dbReference>
<dbReference type="PANTHER" id="PTHR42753">
    <property type="entry name" value="MITOCHONDRIAL RIBOSOME PROTEIN L39/PROLYL-TRNA LIGASE FAMILY MEMBER"/>
    <property type="match status" value="1"/>
</dbReference>
<dbReference type="PANTHER" id="PTHR42753:SF2">
    <property type="entry name" value="PROLINE--TRNA LIGASE"/>
    <property type="match status" value="1"/>
</dbReference>
<dbReference type="Pfam" id="PF03129">
    <property type="entry name" value="HGTP_anticodon"/>
    <property type="match status" value="1"/>
</dbReference>
<dbReference type="Pfam" id="PF00587">
    <property type="entry name" value="tRNA-synt_2b"/>
    <property type="match status" value="1"/>
</dbReference>
<dbReference type="Pfam" id="PF04073">
    <property type="entry name" value="tRNA_edit"/>
    <property type="match status" value="1"/>
</dbReference>
<dbReference type="PRINTS" id="PR01046">
    <property type="entry name" value="TRNASYNTHPRO"/>
</dbReference>
<dbReference type="SUPFAM" id="SSF52954">
    <property type="entry name" value="Class II aaRS ABD-related"/>
    <property type="match status" value="1"/>
</dbReference>
<dbReference type="SUPFAM" id="SSF55681">
    <property type="entry name" value="Class II aaRS and biotin synthetases"/>
    <property type="match status" value="1"/>
</dbReference>
<dbReference type="SUPFAM" id="SSF55826">
    <property type="entry name" value="YbaK/ProRS associated domain"/>
    <property type="match status" value="1"/>
</dbReference>
<dbReference type="PROSITE" id="PS50862">
    <property type="entry name" value="AA_TRNA_LIGASE_II"/>
    <property type="match status" value="1"/>
</dbReference>
<keyword id="KW-0030">Aminoacyl-tRNA synthetase</keyword>
<keyword id="KW-0067">ATP-binding</keyword>
<keyword id="KW-0963">Cytoplasm</keyword>
<keyword id="KW-0436">Ligase</keyword>
<keyword id="KW-0547">Nucleotide-binding</keyword>
<keyword id="KW-0648">Protein biosynthesis</keyword>